<feature type="chain" id="PRO_1000199376" description="Proline--tRNA ligase">
    <location>
        <begin position="1"/>
        <end position="572"/>
    </location>
</feature>
<name>SYP_ERWT9</name>
<organism>
    <name type="scientific">Erwinia tasmaniensis (strain DSM 17950 / CFBP 7177 / CIP 109463 / NCPPB 4357 / Et1/99)</name>
    <dbReference type="NCBI Taxonomy" id="465817"/>
    <lineage>
        <taxon>Bacteria</taxon>
        <taxon>Pseudomonadati</taxon>
        <taxon>Pseudomonadota</taxon>
        <taxon>Gammaproteobacteria</taxon>
        <taxon>Enterobacterales</taxon>
        <taxon>Erwiniaceae</taxon>
        <taxon>Erwinia</taxon>
    </lineage>
</organism>
<reference key="1">
    <citation type="journal article" date="2008" name="Environ. Microbiol.">
        <title>The genome of Erwinia tasmaniensis strain Et1/99, a non-pathogenic bacterium in the genus Erwinia.</title>
        <authorList>
            <person name="Kube M."/>
            <person name="Migdoll A.M."/>
            <person name="Mueller I."/>
            <person name="Kuhl H."/>
            <person name="Beck A."/>
            <person name="Reinhardt R."/>
            <person name="Geider K."/>
        </authorList>
    </citation>
    <scope>NUCLEOTIDE SEQUENCE [LARGE SCALE GENOMIC DNA]</scope>
    <source>
        <strain>DSM 17950 / CFBP 7177 / CIP 109463 / NCPPB 4357 / Et1/99</strain>
    </source>
</reference>
<gene>
    <name evidence="1" type="primary">proS</name>
    <name type="ordered locus">ETA_09150</name>
</gene>
<protein>
    <recommendedName>
        <fullName evidence="1">Proline--tRNA ligase</fullName>
        <ecNumber evidence="1">6.1.1.15</ecNumber>
    </recommendedName>
    <alternativeName>
        <fullName evidence="1">Prolyl-tRNA synthetase</fullName>
        <shortName evidence="1">ProRS</shortName>
    </alternativeName>
</protein>
<comment type="function">
    <text evidence="1">Catalyzes the attachment of proline to tRNA(Pro) in a two-step reaction: proline is first activated by ATP to form Pro-AMP and then transferred to the acceptor end of tRNA(Pro). As ProRS can inadvertently accommodate and process non-cognate amino acids such as alanine and cysteine, to avoid such errors it has two additional distinct editing activities against alanine. One activity is designated as 'pretransfer' editing and involves the tRNA(Pro)-independent hydrolysis of activated Ala-AMP. The other activity is designated 'posttransfer' editing and involves deacylation of mischarged Ala-tRNA(Pro). The misacylated Cys-tRNA(Pro) is not edited by ProRS.</text>
</comment>
<comment type="catalytic activity">
    <reaction evidence="1">
        <text>tRNA(Pro) + L-proline + ATP = L-prolyl-tRNA(Pro) + AMP + diphosphate</text>
        <dbReference type="Rhea" id="RHEA:14305"/>
        <dbReference type="Rhea" id="RHEA-COMP:9700"/>
        <dbReference type="Rhea" id="RHEA-COMP:9702"/>
        <dbReference type="ChEBI" id="CHEBI:30616"/>
        <dbReference type="ChEBI" id="CHEBI:33019"/>
        <dbReference type="ChEBI" id="CHEBI:60039"/>
        <dbReference type="ChEBI" id="CHEBI:78442"/>
        <dbReference type="ChEBI" id="CHEBI:78532"/>
        <dbReference type="ChEBI" id="CHEBI:456215"/>
        <dbReference type="EC" id="6.1.1.15"/>
    </reaction>
</comment>
<comment type="subunit">
    <text evidence="1">Homodimer.</text>
</comment>
<comment type="subcellular location">
    <subcellularLocation>
        <location evidence="1">Cytoplasm</location>
    </subcellularLocation>
</comment>
<comment type="domain">
    <text evidence="1">Consists of three domains: the N-terminal catalytic domain, the editing domain and the C-terminal anticodon-binding domain.</text>
</comment>
<comment type="similarity">
    <text evidence="1">Belongs to the class-II aminoacyl-tRNA synthetase family. ProS type 1 subfamily.</text>
</comment>
<sequence>MRTTQYLLSTLKETPADAEVISHQLMLRAGMIRKLASGLYTWLPTGLRVLKKVENIVREEMNNAGAIEISMPVVQPADLWQESGRWEQYGPELLRLVDRSDRPFVLGPTHEEVITDLIRNELSSYKQLPLNLFQIQTKFRDEVRPRFGVMRSREFIMKDAYSFHTSQGSLQETYDAMYRAYSQSFSRMGLDFRAVQADTGSIGGSASHEFQVLAQSGEDDIVFSTGSDYAANIEMAEALPPAGGRADATQERVQFATPEAKTIADLVEQFTLPIEKTVKTLMVKATKESGHTLVALLVRGDHELNEIKAEKIDIVAAPLTFATEEEIRALVNAGPGSLGPVGLNMPIVADRTVAAMSDFSAGANIDGQHFSGINWQRDLPLPRIADIRNVVEGDASPDGKGTLLIKRGIEVGHIFQLGTKYSEAMKASVQGEDGRNQTLTMGCYGIGITRIVAAAIEQNHDERGIIWSPALAPFQVAILPMNMQKSFRVKELAEALYQQLRAKGIDVILDDRKERPGVMFADMELIGVPHTIVIGERNLDNDEIEYKARRGGEKRLIKTDEIVDFLMAELAQ</sequence>
<dbReference type="EC" id="6.1.1.15" evidence="1"/>
<dbReference type="EMBL" id="CU468135">
    <property type="protein sequence ID" value="CAO95961.1"/>
    <property type="molecule type" value="Genomic_DNA"/>
</dbReference>
<dbReference type="RefSeq" id="WP_012440663.1">
    <property type="nucleotide sequence ID" value="NC_010694.1"/>
</dbReference>
<dbReference type="SMR" id="B2VDZ9"/>
<dbReference type="STRING" id="465817.ETA_09150"/>
<dbReference type="KEGG" id="eta:ETA_09150"/>
<dbReference type="eggNOG" id="COG0442">
    <property type="taxonomic scope" value="Bacteria"/>
</dbReference>
<dbReference type="HOGENOM" id="CLU_016739_0_0_6"/>
<dbReference type="OrthoDB" id="9809052at2"/>
<dbReference type="Proteomes" id="UP000001726">
    <property type="component" value="Chromosome"/>
</dbReference>
<dbReference type="GO" id="GO:0005829">
    <property type="term" value="C:cytosol"/>
    <property type="evidence" value="ECO:0007669"/>
    <property type="project" value="TreeGrafter"/>
</dbReference>
<dbReference type="GO" id="GO:0002161">
    <property type="term" value="F:aminoacyl-tRNA deacylase activity"/>
    <property type="evidence" value="ECO:0007669"/>
    <property type="project" value="InterPro"/>
</dbReference>
<dbReference type="GO" id="GO:0005524">
    <property type="term" value="F:ATP binding"/>
    <property type="evidence" value="ECO:0007669"/>
    <property type="project" value="UniProtKB-UniRule"/>
</dbReference>
<dbReference type="GO" id="GO:0004827">
    <property type="term" value="F:proline-tRNA ligase activity"/>
    <property type="evidence" value="ECO:0007669"/>
    <property type="project" value="UniProtKB-UniRule"/>
</dbReference>
<dbReference type="GO" id="GO:0006433">
    <property type="term" value="P:prolyl-tRNA aminoacylation"/>
    <property type="evidence" value="ECO:0007669"/>
    <property type="project" value="UniProtKB-UniRule"/>
</dbReference>
<dbReference type="CDD" id="cd04334">
    <property type="entry name" value="ProRS-INS"/>
    <property type="match status" value="1"/>
</dbReference>
<dbReference type="CDD" id="cd00861">
    <property type="entry name" value="ProRS_anticodon_short"/>
    <property type="match status" value="1"/>
</dbReference>
<dbReference type="CDD" id="cd00779">
    <property type="entry name" value="ProRS_core_prok"/>
    <property type="match status" value="1"/>
</dbReference>
<dbReference type="FunFam" id="3.30.930.10:FF:000012">
    <property type="entry name" value="Proline--tRNA ligase"/>
    <property type="match status" value="1"/>
</dbReference>
<dbReference type="FunFam" id="3.30.930.10:FF:000097">
    <property type="entry name" value="Proline--tRNA ligase"/>
    <property type="match status" value="1"/>
</dbReference>
<dbReference type="FunFam" id="3.40.50.800:FF:000006">
    <property type="entry name" value="Proline--tRNA ligase"/>
    <property type="match status" value="1"/>
</dbReference>
<dbReference type="FunFam" id="3.90.960.10:FF:000001">
    <property type="entry name" value="Proline--tRNA ligase"/>
    <property type="match status" value="1"/>
</dbReference>
<dbReference type="Gene3D" id="3.40.50.800">
    <property type="entry name" value="Anticodon-binding domain"/>
    <property type="match status" value="1"/>
</dbReference>
<dbReference type="Gene3D" id="3.30.930.10">
    <property type="entry name" value="Bira Bifunctional Protein, Domain 2"/>
    <property type="match status" value="2"/>
</dbReference>
<dbReference type="Gene3D" id="3.90.960.10">
    <property type="entry name" value="YbaK/aminoacyl-tRNA synthetase-associated domain"/>
    <property type="match status" value="1"/>
</dbReference>
<dbReference type="HAMAP" id="MF_01569">
    <property type="entry name" value="Pro_tRNA_synth_type1"/>
    <property type="match status" value="1"/>
</dbReference>
<dbReference type="InterPro" id="IPR002314">
    <property type="entry name" value="aa-tRNA-synt_IIb"/>
</dbReference>
<dbReference type="InterPro" id="IPR006195">
    <property type="entry name" value="aa-tRNA-synth_II"/>
</dbReference>
<dbReference type="InterPro" id="IPR045864">
    <property type="entry name" value="aa-tRNA-synth_II/BPL/LPL"/>
</dbReference>
<dbReference type="InterPro" id="IPR004154">
    <property type="entry name" value="Anticodon-bd"/>
</dbReference>
<dbReference type="InterPro" id="IPR036621">
    <property type="entry name" value="Anticodon-bd_dom_sf"/>
</dbReference>
<dbReference type="InterPro" id="IPR002316">
    <property type="entry name" value="Pro-tRNA-ligase_IIa"/>
</dbReference>
<dbReference type="InterPro" id="IPR004500">
    <property type="entry name" value="Pro-tRNA-synth_IIa_bac-type"/>
</dbReference>
<dbReference type="InterPro" id="IPR023717">
    <property type="entry name" value="Pro-tRNA-Synthase_IIa_type1"/>
</dbReference>
<dbReference type="InterPro" id="IPR050062">
    <property type="entry name" value="Pro-tRNA_synthetase"/>
</dbReference>
<dbReference type="InterPro" id="IPR044140">
    <property type="entry name" value="ProRS_anticodon_short"/>
</dbReference>
<dbReference type="InterPro" id="IPR033730">
    <property type="entry name" value="ProRS_core_prok"/>
</dbReference>
<dbReference type="InterPro" id="IPR036754">
    <property type="entry name" value="YbaK/aa-tRNA-synt-asso_dom_sf"/>
</dbReference>
<dbReference type="InterPro" id="IPR007214">
    <property type="entry name" value="YbaK/aa-tRNA-synth-assoc-dom"/>
</dbReference>
<dbReference type="NCBIfam" id="NF006625">
    <property type="entry name" value="PRK09194.1"/>
    <property type="match status" value="1"/>
</dbReference>
<dbReference type="NCBIfam" id="TIGR00409">
    <property type="entry name" value="proS_fam_II"/>
    <property type="match status" value="1"/>
</dbReference>
<dbReference type="PANTHER" id="PTHR42753">
    <property type="entry name" value="MITOCHONDRIAL RIBOSOME PROTEIN L39/PROLYL-TRNA LIGASE FAMILY MEMBER"/>
    <property type="match status" value="1"/>
</dbReference>
<dbReference type="PANTHER" id="PTHR42753:SF2">
    <property type="entry name" value="PROLINE--TRNA LIGASE"/>
    <property type="match status" value="1"/>
</dbReference>
<dbReference type="Pfam" id="PF03129">
    <property type="entry name" value="HGTP_anticodon"/>
    <property type="match status" value="1"/>
</dbReference>
<dbReference type="Pfam" id="PF00587">
    <property type="entry name" value="tRNA-synt_2b"/>
    <property type="match status" value="1"/>
</dbReference>
<dbReference type="Pfam" id="PF04073">
    <property type="entry name" value="tRNA_edit"/>
    <property type="match status" value="1"/>
</dbReference>
<dbReference type="PIRSF" id="PIRSF001535">
    <property type="entry name" value="ProRS_1"/>
    <property type="match status" value="1"/>
</dbReference>
<dbReference type="PRINTS" id="PR01046">
    <property type="entry name" value="TRNASYNTHPRO"/>
</dbReference>
<dbReference type="SUPFAM" id="SSF52954">
    <property type="entry name" value="Class II aaRS ABD-related"/>
    <property type="match status" value="1"/>
</dbReference>
<dbReference type="SUPFAM" id="SSF55681">
    <property type="entry name" value="Class II aaRS and biotin synthetases"/>
    <property type="match status" value="1"/>
</dbReference>
<dbReference type="SUPFAM" id="SSF55826">
    <property type="entry name" value="YbaK/ProRS associated domain"/>
    <property type="match status" value="1"/>
</dbReference>
<dbReference type="PROSITE" id="PS50862">
    <property type="entry name" value="AA_TRNA_LIGASE_II"/>
    <property type="match status" value="1"/>
</dbReference>
<keyword id="KW-0030">Aminoacyl-tRNA synthetase</keyword>
<keyword id="KW-0067">ATP-binding</keyword>
<keyword id="KW-0963">Cytoplasm</keyword>
<keyword id="KW-0436">Ligase</keyword>
<keyword id="KW-0547">Nucleotide-binding</keyword>
<keyword id="KW-0648">Protein biosynthesis</keyword>
<keyword id="KW-1185">Reference proteome</keyword>
<accession>B2VDZ9</accession>
<proteinExistence type="inferred from homology"/>
<evidence type="ECO:0000255" key="1">
    <source>
        <dbReference type="HAMAP-Rule" id="MF_01569"/>
    </source>
</evidence>